<reference key="1">
    <citation type="journal article" date="2004" name="Nat. Genet.">
        <title>Comparison of genome degradation in Paratyphi A and Typhi, human-restricted serovars of Salmonella enterica that cause typhoid.</title>
        <authorList>
            <person name="McClelland M."/>
            <person name="Sanderson K.E."/>
            <person name="Clifton S.W."/>
            <person name="Latreille P."/>
            <person name="Porwollik S."/>
            <person name="Sabo A."/>
            <person name="Meyer R."/>
            <person name="Bieri T."/>
            <person name="Ozersky P."/>
            <person name="McLellan M."/>
            <person name="Harkins C.R."/>
            <person name="Wang C."/>
            <person name="Nguyen C."/>
            <person name="Berghoff A."/>
            <person name="Elliott G."/>
            <person name="Kohlberg S."/>
            <person name="Strong C."/>
            <person name="Du F."/>
            <person name="Carter J."/>
            <person name="Kremizki C."/>
            <person name="Layman D."/>
            <person name="Leonard S."/>
            <person name="Sun H."/>
            <person name="Fulton L."/>
            <person name="Nash W."/>
            <person name="Miner T."/>
            <person name="Minx P."/>
            <person name="Delehaunty K."/>
            <person name="Fronick C."/>
            <person name="Magrini V."/>
            <person name="Nhan M."/>
            <person name="Warren W."/>
            <person name="Florea L."/>
            <person name="Spieth J."/>
            <person name="Wilson R.K."/>
        </authorList>
    </citation>
    <scope>NUCLEOTIDE SEQUENCE [LARGE SCALE GENOMIC DNA]</scope>
    <source>
        <strain>ATCC 9150 / SARB42</strain>
    </source>
</reference>
<protein>
    <recommendedName>
        <fullName evidence="1">Cell division protein ZipA</fullName>
    </recommendedName>
</protein>
<comment type="function">
    <text evidence="1">Essential cell division protein that stabilizes the FtsZ protofilaments by cross-linking them and that serves as a cytoplasmic membrane anchor for the Z ring. Also required for the recruitment to the septal ring of downstream cell division proteins.</text>
</comment>
<comment type="subunit">
    <text evidence="1">Interacts with FtsZ via their C-terminal domains.</text>
</comment>
<comment type="subcellular location">
    <subcellularLocation>
        <location evidence="1">Cell inner membrane</location>
        <topology evidence="1">Single-pass type I membrane protein</topology>
    </subcellularLocation>
    <text evidence="1">Localizes to the Z ring in an FtsZ-dependent manner.</text>
</comment>
<comment type="similarity">
    <text evidence="1">Belongs to the ZipA family.</text>
</comment>
<keyword id="KW-0131">Cell cycle</keyword>
<keyword id="KW-0132">Cell division</keyword>
<keyword id="KW-0997">Cell inner membrane</keyword>
<keyword id="KW-1003">Cell membrane</keyword>
<keyword id="KW-0472">Membrane</keyword>
<keyword id="KW-0812">Transmembrane</keyword>
<keyword id="KW-1133">Transmembrane helix</keyword>
<name>ZIPA_SALPA</name>
<gene>
    <name evidence="1" type="primary">zipA</name>
    <name type="ordered locus">SPA0437</name>
</gene>
<feature type="chain" id="PRO_0000237134" description="Cell division protein ZipA">
    <location>
        <begin position="1"/>
        <end position="328"/>
    </location>
</feature>
<feature type="topological domain" description="Periplasmic" evidence="1">
    <location>
        <begin position="1"/>
        <end position="6"/>
    </location>
</feature>
<feature type="transmembrane region" description="Helical" evidence="1">
    <location>
        <begin position="7"/>
        <end position="27"/>
    </location>
</feature>
<feature type="topological domain" description="Cytoplasmic" evidence="1">
    <location>
        <begin position="28"/>
        <end position="328"/>
    </location>
</feature>
<feature type="region of interest" description="Disordered" evidence="2">
    <location>
        <begin position="42"/>
        <end position="178"/>
    </location>
</feature>
<feature type="compositionally biased region" description="Acidic residues" evidence="2">
    <location>
        <begin position="51"/>
        <end position="63"/>
    </location>
</feature>
<feature type="compositionally biased region" description="Low complexity" evidence="2">
    <location>
        <begin position="85"/>
        <end position="102"/>
    </location>
</feature>
<feature type="compositionally biased region" description="Low complexity" evidence="2">
    <location>
        <begin position="111"/>
        <end position="132"/>
    </location>
</feature>
<feature type="compositionally biased region" description="Pro residues" evidence="2">
    <location>
        <begin position="133"/>
        <end position="162"/>
    </location>
</feature>
<feature type="compositionally biased region" description="Low complexity" evidence="2">
    <location>
        <begin position="168"/>
        <end position="178"/>
    </location>
</feature>
<dbReference type="EMBL" id="CP000026">
    <property type="protein sequence ID" value="AAV76448.1"/>
    <property type="molecule type" value="Genomic_DNA"/>
</dbReference>
<dbReference type="RefSeq" id="WP_000983126.1">
    <property type="nucleotide sequence ID" value="NC_006511.1"/>
</dbReference>
<dbReference type="SMR" id="Q5PND8"/>
<dbReference type="KEGG" id="spt:SPA0437"/>
<dbReference type="HOGENOM" id="CLU_030174_1_0_6"/>
<dbReference type="Proteomes" id="UP000008185">
    <property type="component" value="Chromosome"/>
</dbReference>
<dbReference type="GO" id="GO:0032153">
    <property type="term" value="C:cell division site"/>
    <property type="evidence" value="ECO:0007669"/>
    <property type="project" value="UniProtKB-UniRule"/>
</dbReference>
<dbReference type="GO" id="GO:0005886">
    <property type="term" value="C:plasma membrane"/>
    <property type="evidence" value="ECO:0007669"/>
    <property type="project" value="UniProtKB-SubCell"/>
</dbReference>
<dbReference type="GO" id="GO:0000917">
    <property type="term" value="P:division septum assembly"/>
    <property type="evidence" value="ECO:0007669"/>
    <property type="project" value="TreeGrafter"/>
</dbReference>
<dbReference type="GO" id="GO:0043093">
    <property type="term" value="P:FtsZ-dependent cytokinesis"/>
    <property type="evidence" value="ECO:0007669"/>
    <property type="project" value="UniProtKB-UniRule"/>
</dbReference>
<dbReference type="CDD" id="cd00231">
    <property type="entry name" value="ZipA"/>
    <property type="match status" value="1"/>
</dbReference>
<dbReference type="FunFam" id="3.30.1400.10:FF:000001">
    <property type="entry name" value="Cell division protein ZipA"/>
    <property type="match status" value="1"/>
</dbReference>
<dbReference type="Gene3D" id="3.30.1400.10">
    <property type="entry name" value="ZipA, C-terminal FtsZ-binding domain"/>
    <property type="match status" value="1"/>
</dbReference>
<dbReference type="HAMAP" id="MF_00509">
    <property type="entry name" value="ZipA"/>
    <property type="match status" value="1"/>
</dbReference>
<dbReference type="InterPro" id="IPR011919">
    <property type="entry name" value="Cell_div_ZipA"/>
</dbReference>
<dbReference type="InterPro" id="IPR007449">
    <property type="entry name" value="ZipA_FtsZ-bd_C"/>
</dbReference>
<dbReference type="InterPro" id="IPR036765">
    <property type="entry name" value="ZipA_FtsZ-bd_C_sf"/>
</dbReference>
<dbReference type="NCBIfam" id="TIGR02205">
    <property type="entry name" value="septum_zipA"/>
    <property type="match status" value="1"/>
</dbReference>
<dbReference type="PANTHER" id="PTHR38685">
    <property type="entry name" value="CELL DIVISION PROTEIN ZIPA"/>
    <property type="match status" value="1"/>
</dbReference>
<dbReference type="PANTHER" id="PTHR38685:SF1">
    <property type="entry name" value="CELL DIVISION PROTEIN ZIPA"/>
    <property type="match status" value="1"/>
</dbReference>
<dbReference type="Pfam" id="PF04354">
    <property type="entry name" value="ZipA_C"/>
    <property type="match status" value="1"/>
</dbReference>
<dbReference type="SMART" id="SM00771">
    <property type="entry name" value="ZipA_C"/>
    <property type="match status" value="1"/>
</dbReference>
<dbReference type="SUPFAM" id="SSF64383">
    <property type="entry name" value="Cell-division protein ZipA, C-terminal domain"/>
    <property type="match status" value="1"/>
</dbReference>
<organism>
    <name type="scientific">Salmonella paratyphi A (strain ATCC 9150 / SARB42)</name>
    <dbReference type="NCBI Taxonomy" id="295319"/>
    <lineage>
        <taxon>Bacteria</taxon>
        <taxon>Pseudomonadati</taxon>
        <taxon>Pseudomonadota</taxon>
        <taxon>Gammaproteobacteria</taxon>
        <taxon>Enterobacterales</taxon>
        <taxon>Enterobacteriaceae</taxon>
        <taxon>Salmonella</taxon>
    </lineage>
</organism>
<evidence type="ECO:0000255" key="1">
    <source>
        <dbReference type="HAMAP-Rule" id="MF_00509"/>
    </source>
</evidence>
<evidence type="ECO:0000256" key="2">
    <source>
        <dbReference type="SAM" id="MobiDB-lite"/>
    </source>
</evidence>
<sequence>MMQDLRLILIIVGAIAIIALLVHGFWTSRKERSSMFRDRPLKRMKSKRDDDSYDDDVEEDEGVGEVRVHRVNHAPGQSQEHDAPRQSPQHQYQPPYASAQPRPAAPPQPQAPMQQPVQQPVQPAPQPQQVQPSAPPVQPPQQQPAPPSQAPQPVAQPAPPPSAQTFQPAEPVVEAEPVVEEAPVVEKPQRKEAVIIMNVAAHHGSELNGEVLLNSIQQSGFKFGDMNIFHRHLSPDGSGPALFSLANMVNPGTFDPEMTDFTTPGVTIFMQVPSYGDALQNFKLMLQSAQHIADEVGGVVLDDQRRMMTPQKLREYQDRIREVMDANA</sequence>
<accession>Q5PND8</accession>
<proteinExistence type="inferred from homology"/>